<keyword id="KW-0150">Chloroplast</keyword>
<keyword id="KW-0934">Plastid</keyword>
<keyword id="KW-1185">Reference proteome</keyword>
<keyword id="KW-0687">Ribonucleoprotein</keyword>
<keyword id="KW-0689">Ribosomal protein</keyword>
<keyword id="KW-0694">RNA-binding</keyword>
<keyword id="KW-0699">rRNA-binding</keyword>
<comment type="subunit">
    <text>Part of the 30S ribosomal subunit.</text>
</comment>
<comment type="subcellular location">
    <subcellularLocation>
        <location>Plastid</location>
        <location>Chloroplast</location>
    </subcellularLocation>
</comment>
<comment type="similarity">
    <text evidence="1">Belongs to the bacterial ribosomal protein bS18 family.</text>
</comment>
<proteinExistence type="inferred from homology"/>
<evidence type="ECO:0000255" key="1">
    <source>
        <dbReference type="HAMAP-Rule" id="MF_00270"/>
    </source>
</evidence>
<evidence type="ECO:0000256" key="2">
    <source>
        <dbReference type="SAM" id="MobiDB-lite"/>
    </source>
</evidence>
<evidence type="ECO:0000305" key="3"/>
<name>RR18_SORBI</name>
<reference key="1">
    <citation type="journal article" date="2007" name="Theor. Appl. Genet.">
        <title>Complete chloroplast genome sequences of Hordeum vulgare, Sorghum bicolor and Agrostis stolonifera, and comparative analyses with other grass genomes.</title>
        <authorList>
            <person name="Saski C."/>
            <person name="Lee S.-B."/>
            <person name="Fjellheim S."/>
            <person name="Guda C."/>
            <person name="Jansen R.K."/>
            <person name="Luo H."/>
            <person name="Tomkins J."/>
            <person name="Rognli O.A."/>
            <person name="Daniell H."/>
            <person name="Clarke J.L."/>
        </authorList>
    </citation>
    <scope>NUCLEOTIDE SEQUENCE [LARGE SCALE GENOMIC DNA]</scope>
    <source>
        <strain>cv. BTx623</strain>
    </source>
</reference>
<accession>A1E9U6</accession>
<sequence length="163" mass="19713">MYISKQPFRKSKQPFRKSKQTFHKSKQPFRKFKQPFRKSKQPFRRRSRIGPGDRIDYRNMSLINRFISEQGKILSRRINRLTLKQQRLITVAIKQARILSFLPFRNYENEKQFQAQAISIITGPRHRKNRHIPQLTQKFNSNRNLRNSNQNLRNNNRNLSSDC</sequence>
<gene>
    <name evidence="1" type="primary">rps18</name>
</gene>
<protein>
    <recommendedName>
        <fullName evidence="1">Small ribosomal subunit protein bS18c</fullName>
    </recommendedName>
    <alternativeName>
        <fullName evidence="3">30S ribosomal protein S18, chloroplastic</fullName>
    </alternativeName>
</protein>
<geneLocation type="chloroplast"/>
<dbReference type="EMBL" id="EF115542">
    <property type="protein sequence ID" value="ABK79518.1"/>
    <property type="molecule type" value="Genomic_DNA"/>
</dbReference>
<dbReference type="RefSeq" id="YP_899429.1">
    <property type="nucleotide sequence ID" value="NC_008602.1"/>
</dbReference>
<dbReference type="SMR" id="A1E9U6"/>
<dbReference type="FunCoup" id="A1E9U6">
    <property type="interactions" value="384"/>
</dbReference>
<dbReference type="STRING" id="4558.A1E9U6"/>
<dbReference type="GeneID" id="4549213"/>
<dbReference type="KEGG" id="sbi:4549213"/>
<dbReference type="eggNOG" id="KOG3162">
    <property type="taxonomic scope" value="Eukaryota"/>
</dbReference>
<dbReference type="InParanoid" id="A1E9U6"/>
<dbReference type="OrthoDB" id="21463at2759"/>
<dbReference type="Proteomes" id="UP000000768">
    <property type="component" value="Chloroplast"/>
</dbReference>
<dbReference type="ExpressionAtlas" id="A1E9U6">
    <property type="expression patterns" value="baseline"/>
</dbReference>
<dbReference type="GO" id="GO:0009507">
    <property type="term" value="C:chloroplast"/>
    <property type="evidence" value="ECO:0007669"/>
    <property type="project" value="UniProtKB-SubCell"/>
</dbReference>
<dbReference type="GO" id="GO:0005763">
    <property type="term" value="C:mitochondrial small ribosomal subunit"/>
    <property type="evidence" value="ECO:0000318"/>
    <property type="project" value="GO_Central"/>
</dbReference>
<dbReference type="GO" id="GO:0070181">
    <property type="term" value="F:small ribosomal subunit rRNA binding"/>
    <property type="evidence" value="ECO:0000318"/>
    <property type="project" value="GO_Central"/>
</dbReference>
<dbReference type="GO" id="GO:0003735">
    <property type="term" value="F:structural constituent of ribosome"/>
    <property type="evidence" value="ECO:0000318"/>
    <property type="project" value="GO_Central"/>
</dbReference>
<dbReference type="GO" id="GO:0006412">
    <property type="term" value="P:translation"/>
    <property type="evidence" value="ECO:0000318"/>
    <property type="project" value="GO_Central"/>
</dbReference>
<dbReference type="FunFam" id="4.10.640.10:FF:000002">
    <property type="entry name" value="30S ribosomal protein S18, chloroplastic"/>
    <property type="match status" value="1"/>
</dbReference>
<dbReference type="Gene3D" id="4.10.640.10">
    <property type="entry name" value="Ribosomal protein S18"/>
    <property type="match status" value="1"/>
</dbReference>
<dbReference type="HAMAP" id="MF_00270">
    <property type="entry name" value="Ribosomal_bS18"/>
    <property type="match status" value="1"/>
</dbReference>
<dbReference type="InterPro" id="IPR001648">
    <property type="entry name" value="Ribosomal_bS18"/>
</dbReference>
<dbReference type="InterPro" id="IPR018275">
    <property type="entry name" value="Ribosomal_bS18_CS"/>
</dbReference>
<dbReference type="InterPro" id="IPR036870">
    <property type="entry name" value="Ribosomal_bS18_sf"/>
</dbReference>
<dbReference type="NCBIfam" id="TIGR00165">
    <property type="entry name" value="S18"/>
    <property type="match status" value="1"/>
</dbReference>
<dbReference type="PANTHER" id="PTHR13479">
    <property type="entry name" value="30S RIBOSOMAL PROTEIN S18"/>
    <property type="match status" value="1"/>
</dbReference>
<dbReference type="PANTHER" id="PTHR13479:SF40">
    <property type="entry name" value="SMALL RIBOSOMAL SUBUNIT PROTEIN BS18M"/>
    <property type="match status" value="1"/>
</dbReference>
<dbReference type="Pfam" id="PF01084">
    <property type="entry name" value="Ribosomal_S18"/>
    <property type="match status" value="1"/>
</dbReference>
<dbReference type="PRINTS" id="PR00974">
    <property type="entry name" value="RIBOSOMALS18"/>
</dbReference>
<dbReference type="SUPFAM" id="SSF46911">
    <property type="entry name" value="Ribosomal protein S18"/>
    <property type="match status" value="1"/>
</dbReference>
<dbReference type="PROSITE" id="PS00057">
    <property type="entry name" value="RIBOSOMAL_S18"/>
    <property type="match status" value="1"/>
</dbReference>
<feature type="chain" id="PRO_0000276890" description="Small ribosomal subunit protein bS18c">
    <location>
        <begin position="1"/>
        <end position="163"/>
    </location>
</feature>
<feature type="region of interest" description="Disordered" evidence="2">
    <location>
        <begin position="1"/>
        <end position="52"/>
    </location>
</feature>
<feature type="region of interest" description="Disordered" evidence="2">
    <location>
        <begin position="144"/>
        <end position="163"/>
    </location>
</feature>
<feature type="compositionally biased region" description="Basic residues" evidence="2">
    <location>
        <begin position="7"/>
        <end position="48"/>
    </location>
</feature>
<organism>
    <name type="scientific">Sorghum bicolor</name>
    <name type="common">Sorghum</name>
    <name type="synonym">Sorghum vulgare</name>
    <dbReference type="NCBI Taxonomy" id="4558"/>
    <lineage>
        <taxon>Eukaryota</taxon>
        <taxon>Viridiplantae</taxon>
        <taxon>Streptophyta</taxon>
        <taxon>Embryophyta</taxon>
        <taxon>Tracheophyta</taxon>
        <taxon>Spermatophyta</taxon>
        <taxon>Magnoliopsida</taxon>
        <taxon>Liliopsida</taxon>
        <taxon>Poales</taxon>
        <taxon>Poaceae</taxon>
        <taxon>PACMAD clade</taxon>
        <taxon>Panicoideae</taxon>
        <taxon>Andropogonodae</taxon>
        <taxon>Andropogoneae</taxon>
        <taxon>Sorghinae</taxon>
        <taxon>Sorghum</taxon>
    </lineage>
</organism>